<sequence>MTTILSVRRDGQVVIGGDGQVSLGNTVMKGNARKVRRLYKNQVLAGFAGGTADAFTLFERFEAKLESHNGQLTRAAVELAKDWRTDRSLRRLEALLAVADKEASLIITGNGDVIQPEDDLIAIGSGGMYAQAAARALLENTQLDARNIVEKGLKIAGDICVYTNQNHTIEVLDY</sequence>
<accession>B3PI66</accession>
<protein>
    <recommendedName>
        <fullName evidence="1">ATP-dependent protease subunit HslV</fullName>
        <ecNumber evidence="1">3.4.25.2</ecNumber>
    </recommendedName>
</protein>
<gene>
    <name evidence="1" type="primary">hslV</name>
    <name type="ordered locus">CJA_0405</name>
</gene>
<dbReference type="EC" id="3.4.25.2" evidence="1"/>
<dbReference type="EMBL" id="CP000934">
    <property type="protein sequence ID" value="ACE84840.1"/>
    <property type="molecule type" value="Genomic_DNA"/>
</dbReference>
<dbReference type="RefSeq" id="WP_012486087.1">
    <property type="nucleotide sequence ID" value="NC_010995.1"/>
</dbReference>
<dbReference type="SMR" id="B3PI66"/>
<dbReference type="STRING" id="498211.CJA_0405"/>
<dbReference type="MEROPS" id="T01.006"/>
<dbReference type="KEGG" id="cja:CJA_0405"/>
<dbReference type="eggNOG" id="COG5405">
    <property type="taxonomic scope" value="Bacteria"/>
</dbReference>
<dbReference type="HOGENOM" id="CLU_093872_1_0_6"/>
<dbReference type="OrthoDB" id="9804884at2"/>
<dbReference type="Proteomes" id="UP000001036">
    <property type="component" value="Chromosome"/>
</dbReference>
<dbReference type="GO" id="GO:0009376">
    <property type="term" value="C:HslUV protease complex"/>
    <property type="evidence" value="ECO:0007669"/>
    <property type="project" value="UniProtKB-UniRule"/>
</dbReference>
<dbReference type="GO" id="GO:0005839">
    <property type="term" value="C:proteasome core complex"/>
    <property type="evidence" value="ECO:0007669"/>
    <property type="project" value="InterPro"/>
</dbReference>
<dbReference type="GO" id="GO:0046872">
    <property type="term" value="F:metal ion binding"/>
    <property type="evidence" value="ECO:0007669"/>
    <property type="project" value="UniProtKB-KW"/>
</dbReference>
<dbReference type="GO" id="GO:0004298">
    <property type="term" value="F:threonine-type endopeptidase activity"/>
    <property type="evidence" value="ECO:0007669"/>
    <property type="project" value="UniProtKB-KW"/>
</dbReference>
<dbReference type="GO" id="GO:0051603">
    <property type="term" value="P:proteolysis involved in protein catabolic process"/>
    <property type="evidence" value="ECO:0007669"/>
    <property type="project" value="InterPro"/>
</dbReference>
<dbReference type="CDD" id="cd01913">
    <property type="entry name" value="protease_HslV"/>
    <property type="match status" value="1"/>
</dbReference>
<dbReference type="FunFam" id="3.60.20.10:FF:000002">
    <property type="entry name" value="ATP-dependent protease subunit HslV"/>
    <property type="match status" value="1"/>
</dbReference>
<dbReference type="Gene3D" id="3.60.20.10">
    <property type="entry name" value="Glutamine Phosphoribosylpyrophosphate, subunit 1, domain 1"/>
    <property type="match status" value="1"/>
</dbReference>
<dbReference type="HAMAP" id="MF_00248">
    <property type="entry name" value="HslV"/>
    <property type="match status" value="1"/>
</dbReference>
<dbReference type="InterPro" id="IPR022281">
    <property type="entry name" value="ATP-dep_Prtase_HsIV_su"/>
</dbReference>
<dbReference type="InterPro" id="IPR029055">
    <property type="entry name" value="Ntn_hydrolases_N"/>
</dbReference>
<dbReference type="InterPro" id="IPR001353">
    <property type="entry name" value="Proteasome_sua/b"/>
</dbReference>
<dbReference type="InterPro" id="IPR023333">
    <property type="entry name" value="Proteasome_suB-type"/>
</dbReference>
<dbReference type="NCBIfam" id="TIGR03692">
    <property type="entry name" value="ATP_dep_HslV"/>
    <property type="match status" value="1"/>
</dbReference>
<dbReference type="NCBIfam" id="NF003964">
    <property type="entry name" value="PRK05456.1"/>
    <property type="match status" value="1"/>
</dbReference>
<dbReference type="PANTHER" id="PTHR32194:SF0">
    <property type="entry name" value="ATP-DEPENDENT PROTEASE SUBUNIT HSLV"/>
    <property type="match status" value="1"/>
</dbReference>
<dbReference type="PANTHER" id="PTHR32194">
    <property type="entry name" value="METALLOPROTEASE TLDD"/>
    <property type="match status" value="1"/>
</dbReference>
<dbReference type="Pfam" id="PF00227">
    <property type="entry name" value="Proteasome"/>
    <property type="match status" value="1"/>
</dbReference>
<dbReference type="PIRSF" id="PIRSF039093">
    <property type="entry name" value="HslV"/>
    <property type="match status" value="1"/>
</dbReference>
<dbReference type="SUPFAM" id="SSF56235">
    <property type="entry name" value="N-terminal nucleophile aminohydrolases (Ntn hydrolases)"/>
    <property type="match status" value="1"/>
</dbReference>
<dbReference type="PROSITE" id="PS51476">
    <property type="entry name" value="PROTEASOME_BETA_2"/>
    <property type="match status" value="1"/>
</dbReference>
<comment type="function">
    <text evidence="1">Protease subunit of a proteasome-like degradation complex believed to be a general protein degrading machinery.</text>
</comment>
<comment type="catalytic activity">
    <reaction evidence="1">
        <text>ATP-dependent cleavage of peptide bonds with broad specificity.</text>
        <dbReference type="EC" id="3.4.25.2"/>
    </reaction>
</comment>
<comment type="activity regulation">
    <text evidence="1">Allosterically activated by HslU binding.</text>
</comment>
<comment type="subunit">
    <text evidence="1">A double ring-shaped homohexamer of HslV is capped on each side by a ring-shaped HslU homohexamer. The assembly of the HslU/HslV complex is dependent on binding of ATP.</text>
</comment>
<comment type="subcellular location">
    <subcellularLocation>
        <location evidence="1">Cytoplasm</location>
    </subcellularLocation>
</comment>
<comment type="similarity">
    <text evidence="1">Belongs to the peptidase T1B family. HslV subfamily.</text>
</comment>
<organism>
    <name type="scientific">Cellvibrio japonicus (strain Ueda107)</name>
    <name type="common">Pseudomonas fluorescens subsp. cellulosa</name>
    <dbReference type="NCBI Taxonomy" id="498211"/>
    <lineage>
        <taxon>Bacteria</taxon>
        <taxon>Pseudomonadati</taxon>
        <taxon>Pseudomonadota</taxon>
        <taxon>Gammaproteobacteria</taxon>
        <taxon>Cellvibrionales</taxon>
        <taxon>Cellvibrionaceae</taxon>
        <taxon>Cellvibrio</taxon>
    </lineage>
</organism>
<keyword id="KW-0021">Allosteric enzyme</keyword>
<keyword id="KW-0963">Cytoplasm</keyword>
<keyword id="KW-0378">Hydrolase</keyword>
<keyword id="KW-0479">Metal-binding</keyword>
<keyword id="KW-0645">Protease</keyword>
<keyword id="KW-1185">Reference proteome</keyword>
<keyword id="KW-0915">Sodium</keyword>
<keyword id="KW-0888">Threonine protease</keyword>
<name>HSLV_CELJU</name>
<reference key="1">
    <citation type="journal article" date="2008" name="J. Bacteriol.">
        <title>Insights into plant cell wall degradation from the genome sequence of the soil bacterium Cellvibrio japonicus.</title>
        <authorList>
            <person name="DeBoy R.T."/>
            <person name="Mongodin E.F."/>
            <person name="Fouts D.E."/>
            <person name="Tailford L.E."/>
            <person name="Khouri H."/>
            <person name="Emerson J.B."/>
            <person name="Mohamoud Y."/>
            <person name="Watkins K."/>
            <person name="Henrissat B."/>
            <person name="Gilbert H.J."/>
            <person name="Nelson K.E."/>
        </authorList>
    </citation>
    <scope>NUCLEOTIDE SEQUENCE [LARGE SCALE GENOMIC DNA]</scope>
    <source>
        <strain>Ueda107</strain>
    </source>
</reference>
<feature type="chain" id="PRO_1000100883" description="ATP-dependent protease subunit HslV">
    <location>
        <begin position="1"/>
        <end position="174"/>
    </location>
</feature>
<feature type="active site" evidence="1">
    <location>
        <position position="2"/>
    </location>
</feature>
<feature type="binding site" evidence="1">
    <location>
        <position position="157"/>
    </location>
    <ligand>
        <name>Na(+)</name>
        <dbReference type="ChEBI" id="CHEBI:29101"/>
    </ligand>
</feature>
<feature type="binding site" evidence="1">
    <location>
        <position position="160"/>
    </location>
    <ligand>
        <name>Na(+)</name>
        <dbReference type="ChEBI" id="CHEBI:29101"/>
    </ligand>
</feature>
<feature type="binding site" evidence="1">
    <location>
        <position position="163"/>
    </location>
    <ligand>
        <name>Na(+)</name>
        <dbReference type="ChEBI" id="CHEBI:29101"/>
    </ligand>
</feature>
<proteinExistence type="inferred from homology"/>
<evidence type="ECO:0000255" key="1">
    <source>
        <dbReference type="HAMAP-Rule" id="MF_00248"/>
    </source>
</evidence>